<accession>Q57569</accession>
<proteinExistence type="predicted"/>
<protein>
    <recommendedName>
        <fullName>Uncharacterized protein MJ0105</fullName>
    </recommendedName>
</protein>
<name>Y105_METJA</name>
<dbReference type="EMBL" id="L77117">
    <property type="protein sequence ID" value="AAB98085.1"/>
    <property type="molecule type" value="Genomic_DNA"/>
</dbReference>
<dbReference type="PIR" id="A64313">
    <property type="entry name" value="A64313"/>
</dbReference>
<dbReference type="STRING" id="243232.MJ_0105"/>
<dbReference type="PaxDb" id="243232-MJ_0105"/>
<dbReference type="EnsemblBacteria" id="AAB98085">
    <property type="protein sequence ID" value="AAB98085"/>
    <property type="gene ID" value="MJ_0105"/>
</dbReference>
<dbReference type="KEGG" id="mja:MJ_0105"/>
<dbReference type="eggNOG" id="arCOG04420">
    <property type="taxonomic scope" value="Archaea"/>
</dbReference>
<dbReference type="HOGENOM" id="CLU_144580_0_0_2"/>
<dbReference type="InParanoid" id="Q57569"/>
<dbReference type="OrthoDB" id="49941at2157"/>
<dbReference type="PhylomeDB" id="Q57569"/>
<dbReference type="Proteomes" id="UP000000805">
    <property type="component" value="Chromosome"/>
</dbReference>
<dbReference type="InterPro" id="IPR007417">
    <property type="entry name" value="DUF473"/>
</dbReference>
<dbReference type="Pfam" id="PF04322">
    <property type="entry name" value="DUF473"/>
    <property type="match status" value="1"/>
</dbReference>
<keyword id="KW-1185">Reference proteome</keyword>
<reference key="1">
    <citation type="journal article" date="1996" name="Science">
        <title>Complete genome sequence of the methanogenic archaeon, Methanococcus jannaschii.</title>
        <authorList>
            <person name="Bult C.J."/>
            <person name="White O."/>
            <person name="Olsen G.J."/>
            <person name="Zhou L."/>
            <person name="Fleischmann R.D."/>
            <person name="Sutton G.G."/>
            <person name="Blake J.A."/>
            <person name="FitzGerald L.M."/>
            <person name="Clayton R.A."/>
            <person name="Gocayne J.D."/>
            <person name="Kerlavage A.R."/>
            <person name="Dougherty B.A."/>
            <person name="Tomb J.-F."/>
            <person name="Adams M.D."/>
            <person name="Reich C.I."/>
            <person name="Overbeek R."/>
            <person name="Kirkness E.F."/>
            <person name="Weinstock K.G."/>
            <person name="Merrick J.M."/>
            <person name="Glodek A."/>
            <person name="Scott J.L."/>
            <person name="Geoghagen N.S.M."/>
            <person name="Weidman J.F."/>
            <person name="Fuhrmann J.L."/>
            <person name="Nguyen D."/>
            <person name="Utterback T.R."/>
            <person name="Kelley J.M."/>
            <person name="Peterson J.D."/>
            <person name="Sadow P.W."/>
            <person name="Hanna M.C."/>
            <person name="Cotton M.D."/>
            <person name="Roberts K.M."/>
            <person name="Hurst M.A."/>
            <person name="Kaine B.P."/>
            <person name="Borodovsky M."/>
            <person name="Klenk H.-P."/>
            <person name="Fraser C.M."/>
            <person name="Smith H.O."/>
            <person name="Woese C.R."/>
            <person name="Venter J.C."/>
        </authorList>
    </citation>
    <scope>NUCLEOTIDE SEQUENCE [LARGE SCALE GENOMIC DNA]</scope>
    <source>
        <strain>ATCC 43067 / DSM 2661 / JAL-1 / JCM 10045 / NBRC 100440</strain>
    </source>
</reference>
<sequence length="152" mass="17506">MDTTRPLSWDFQSQLMSNLKILYCLNMLKLSNWYFGGIMKVYGLFGINENAINDFIENHIKTFTIINALNLETVKNLKEGDLVFITSTLREDLRNGTEGILGRVINVSLVPQMINGFEEKEIIAGRVQLEMLGFAKCVKYESIHVEITFRMY</sequence>
<gene>
    <name type="ordered locus">MJ0105</name>
</gene>
<feature type="chain" id="PRO_0000106694" description="Uncharacterized protein MJ0105">
    <location>
        <begin position="1"/>
        <end position="152"/>
    </location>
</feature>
<organism>
    <name type="scientific">Methanocaldococcus jannaschii (strain ATCC 43067 / DSM 2661 / JAL-1 / JCM 10045 / NBRC 100440)</name>
    <name type="common">Methanococcus jannaschii</name>
    <dbReference type="NCBI Taxonomy" id="243232"/>
    <lineage>
        <taxon>Archaea</taxon>
        <taxon>Methanobacteriati</taxon>
        <taxon>Methanobacteriota</taxon>
        <taxon>Methanomada group</taxon>
        <taxon>Methanococci</taxon>
        <taxon>Methanococcales</taxon>
        <taxon>Methanocaldococcaceae</taxon>
        <taxon>Methanocaldococcus</taxon>
    </lineage>
</organism>